<dbReference type="EMBL" id="AL117202">
    <property type="protein sequence ID" value="CAB55081.1"/>
    <property type="molecule type" value="Genomic_DNA"/>
</dbReference>
<dbReference type="PIR" id="T31532">
    <property type="entry name" value="T31532"/>
</dbReference>
<dbReference type="RefSeq" id="NP_499450.1">
    <property type="nucleotide sequence ID" value="NM_067049.8"/>
</dbReference>
<dbReference type="SMR" id="Q9NAH4"/>
<dbReference type="BioGRID" id="41738">
    <property type="interactions" value="3"/>
</dbReference>
<dbReference type="FunCoup" id="Q9NAH4">
    <property type="interactions" value="2764"/>
</dbReference>
<dbReference type="STRING" id="6239.Y47D3A.21.1"/>
<dbReference type="iPTMnet" id="Q9NAH4"/>
<dbReference type="PaxDb" id="6239-Y47D3A.21"/>
<dbReference type="PeptideAtlas" id="Q9NAH4"/>
<dbReference type="EnsemblMetazoa" id="Y47D3A.21.1">
    <property type="protein sequence ID" value="Y47D3A.21.1"/>
    <property type="gene ID" value="WBGene00012932"/>
</dbReference>
<dbReference type="GeneID" id="176556"/>
<dbReference type="KEGG" id="cel:CELE_Y47D3A.21"/>
<dbReference type="UCSC" id="Y47D3A.21">
    <property type="organism name" value="c. elegans"/>
</dbReference>
<dbReference type="AGR" id="WB:WBGene00012932"/>
<dbReference type="CTD" id="176556"/>
<dbReference type="WormBase" id="Y47D3A.21">
    <property type="protein sequence ID" value="CE22051"/>
    <property type="gene ID" value="WBGene00012932"/>
</dbReference>
<dbReference type="eggNOG" id="KOG3239">
    <property type="taxonomic scope" value="Eukaryota"/>
</dbReference>
<dbReference type="GeneTree" id="ENSGT00390000014349"/>
<dbReference type="HOGENOM" id="CLU_073511_1_0_1"/>
<dbReference type="InParanoid" id="Q9NAH4"/>
<dbReference type="OMA" id="EVFEIDM"/>
<dbReference type="OrthoDB" id="277199at2759"/>
<dbReference type="PhylomeDB" id="Q9NAH4"/>
<dbReference type="PRO" id="PR:Q9NAH4"/>
<dbReference type="Proteomes" id="UP000001940">
    <property type="component" value="Chromosome III"/>
</dbReference>
<dbReference type="Bgee" id="WBGene00012932">
    <property type="expression patterns" value="Expressed in embryo and 4 other cell types or tissues"/>
</dbReference>
<dbReference type="GO" id="GO:0003743">
    <property type="term" value="F:translation initiation factor activity"/>
    <property type="evidence" value="ECO:0007669"/>
    <property type="project" value="InterPro"/>
</dbReference>
<dbReference type="GO" id="GO:0001731">
    <property type="term" value="P:formation of translation preinitiation complex"/>
    <property type="evidence" value="ECO:0000318"/>
    <property type="project" value="GO_Central"/>
</dbReference>
<dbReference type="GO" id="GO:0002188">
    <property type="term" value="P:translation reinitiation"/>
    <property type="evidence" value="ECO:0000318"/>
    <property type="project" value="GO_Central"/>
</dbReference>
<dbReference type="CDD" id="cd11607">
    <property type="entry name" value="DENR_C"/>
    <property type="match status" value="1"/>
</dbReference>
<dbReference type="FunFam" id="3.30.780.10:FF:000004">
    <property type="entry name" value="density-regulated protein-like"/>
    <property type="match status" value="1"/>
</dbReference>
<dbReference type="Gene3D" id="3.30.780.10">
    <property type="entry name" value="SUI1-like domain"/>
    <property type="match status" value="1"/>
</dbReference>
<dbReference type="InterPro" id="IPR050318">
    <property type="entry name" value="DENR/SUI1_TIF"/>
</dbReference>
<dbReference type="InterPro" id="IPR046447">
    <property type="entry name" value="DENR_C"/>
</dbReference>
<dbReference type="InterPro" id="IPR005873">
    <property type="entry name" value="DENR_eukaryotes"/>
</dbReference>
<dbReference type="InterPro" id="IPR048517">
    <property type="entry name" value="DENR_N"/>
</dbReference>
<dbReference type="InterPro" id="IPR001950">
    <property type="entry name" value="SUI1"/>
</dbReference>
<dbReference type="InterPro" id="IPR036877">
    <property type="entry name" value="SUI1_dom_sf"/>
</dbReference>
<dbReference type="NCBIfam" id="TIGR01159">
    <property type="entry name" value="DRP1"/>
    <property type="match status" value="1"/>
</dbReference>
<dbReference type="PANTHER" id="PTHR12789:SF0">
    <property type="entry name" value="DENSITY-REGULATED PROTEIN"/>
    <property type="match status" value="1"/>
</dbReference>
<dbReference type="PANTHER" id="PTHR12789">
    <property type="entry name" value="DENSITY-REGULATED PROTEIN HOMOLOG"/>
    <property type="match status" value="1"/>
</dbReference>
<dbReference type="Pfam" id="PF21023">
    <property type="entry name" value="DENR_N"/>
    <property type="match status" value="1"/>
</dbReference>
<dbReference type="Pfam" id="PF01253">
    <property type="entry name" value="SUI1"/>
    <property type="match status" value="1"/>
</dbReference>
<dbReference type="SUPFAM" id="SSF55159">
    <property type="entry name" value="eIF1-like"/>
    <property type="match status" value="1"/>
</dbReference>
<dbReference type="PROSITE" id="PS50296">
    <property type="entry name" value="SUI1"/>
    <property type="match status" value="1"/>
</dbReference>
<reference key="1">
    <citation type="journal article" date="1998" name="Science">
        <title>Genome sequence of the nematode C. elegans: a platform for investigating biology.</title>
        <authorList>
            <consortium name="The C. elegans sequencing consortium"/>
        </authorList>
    </citation>
    <scope>NUCLEOTIDE SEQUENCE [LARGE SCALE GENOMIC DNA]</scope>
    <source>
        <strain>Bristol N2</strain>
    </source>
</reference>
<comment type="similarity">
    <text evidence="3">Belongs to the DENR family.</text>
</comment>
<proteinExistence type="inferred from homology"/>
<gene>
    <name type="ORF">Y47D3A.21</name>
</gene>
<protein>
    <recommendedName>
        <fullName>Density-regulated protein homolog</fullName>
    </recommendedName>
</protein>
<sequence>MSDGETAVIQSLAPGPIDGVSYPLKMVYCGQCSMPPEYCDYSGQTDVCRAWATQNAPELLEGLEISDEPAADGDEKKKQKRGGKGSKTGAAAAQAAASGGKKKGGGPQKVTLQREPRGKKSVTVIKGLATFDIDLKVASKLFAQKFACGSSVTGADEIVIQGDVKDDLLDLIPEKWKQVTDEQIDDLGDKKR</sequence>
<evidence type="ECO:0000255" key="1">
    <source>
        <dbReference type="PROSITE-ProRule" id="PRU00200"/>
    </source>
</evidence>
<evidence type="ECO:0000256" key="2">
    <source>
        <dbReference type="SAM" id="MobiDB-lite"/>
    </source>
</evidence>
<evidence type="ECO:0000305" key="3"/>
<accession>Q9NAH4</accession>
<feature type="chain" id="PRO_0000130607" description="Density-regulated protein homolog">
    <location>
        <begin position="1"/>
        <end position="192"/>
    </location>
</feature>
<feature type="domain" description="SUI1" evidence="1">
    <location>
        <begin position="117"/>
        <end position="176"/>
    </location>
</feature>
<feature type="region of interest" description="Disordered" evidence="2">
    <location>
        <begin position="62"/>
        <end position="116"/>
    </location>
</feature>
<feature type="compositionally biased region" description="Low complexity" evidence="2">
    <location>
        <begin position="87"/>
        <end position="99"/>
    </location>
</feature>
<keyword id="KW-1185">Reference proteome</keyword>
<organism>
    <name type="scientific">Caenorhabditis elegans</name>
    <dbReference type="NCBI Taxonomy" id="6239"/>
    <lineage>
        <taxon>Eukaryota</taxon>
        <taxon>Metazoa</taxon>
        <taxon>Ecdysozoa</taxon>
        <taxon>Nematoda</taxon>
        <taxon>Chromadorea</taxon>
        <taxon>Rhabditida</taxon>
        <taxon>Rhabditina</taxon>
        <taxon>Rhabditomorpha</taxon>
        <taxon>Rhabditoidea</taxon>
        <taxon>Rhabditidae</taxon>
        <taxon>Peloderinae</taxon>
        <taxon>Caenorhabditis</taxon>
    </lineage>
</organism>
<name>DENR_CAEEL</name>